<organism>
    <name type="scientific">Rattus norvegicus</name>
    <name type="common">Rat</name>
    <dbReference type="NCBI Taxonomy" id="10116"/>
    <lineage>
        <taxon>Eukaryota</taxon>
        <taxon>Metazoa</taxon>
        <taxon>Chordata</taxon>
        <taxon>Craniata</taxon>
        <taxon>Vertebrata</taxon>
        <taxon>Euteleostomi</taxon>
        <taxon>Mammalia</taxon>
        <taxon>Eutheria</taxon>
        <taxon>Euarchontoglires</taxon>
        <taxon>Glires</taxon>
        <taxon>Rodentia</taxon>
        <taxon>Myomorpha</taxon>
        <taxon>Muroidea</taxon>
        <taxon>Muridae</taxon>
        <taxon>Murinae</taxon>
        <taxon>Rattus</taxon>
    </lineage>
</organism>
<proteinExistence type="evidence at protein level"/>
<protein>
    <recommendedName>
        <fullName evidence="2">Peptidyl-prolyl cis-trans isomerase D</fullName>
        <shortName evidence="2">PPIase D</shortName>
        <ecNumber evidence="2">5.2.1.8</ecNumber>
    </recommendedName>
    <alternativeName>
        <fullName>40 kDa peptidyl-prolyl cis-trans isomerase</fullName>
    </alternativeName>
    <alternativeName>
        <fullName evidence="2">Cyclophilin-40</fullName>
        <shortName evidence="2">CYP-40</shortName>
    </alternativeName>
    <alternativeName>
        <fullName evidence="2">Rotamase D</fullName>
    </alternativeName>
</protein>
<evidence type="ECO:0000250" key="1"/>
<evidence type="ECO:0000250" key="2">
    <source>
        <dbReference type="UniProtKB" id="Q08752"/>
    </source>
</evidence>
<evidence type="ECO:0000250" key="3">
    <source>
        <dbReference type="UniProtKB" id="Q9CR16"/>
    </source>
</evidence>
<evidence type="ECO:0000255" key="4">
    <source>
        <dbReference type="PROSITE-ProRule" id="PRU00156"/>
    </source>
</evidence>
<evidence type="ECO:0000305" key="5"/>
<evidence type="ECO:0000312" key="6">
    <source>
        <dbReference type="RGD" id="1303174"/>
    </source>
</evidence>
<keyword id="KW-0007">Acetylation</keyword>
<keyword id="KW-0053">Apoptosis</keyword>
<keyword id="KW-0143">Chaperone</keyword>
<keyword id="KW-0963">Cytoplasm</keyword>
<keyword id="KW-0903">Direct protein sequencing</keyword>
<keyword id="KW-0413">Isomerase</keyword>
<keyword id="KW-0539">Nucleus</keyword>
<keyword id="KW-0597">Phosphoprotein</keyword>
<keyword id="KW-0653">Protein transport</keyword>
<keyword id="KW-1185">Reference proteome</keyword>
<keyword id="KW-0677">Repeat</keyword>
<keyword id="KW-0697">Rotamase</keyword>
<keyword id="KW-0802">TPR repeat</keyword>
<keyword id="KW-0813">Transport</keyword>
<comment type="function">
    <text evidence="3">PPIase that catalyzes the cis-trans isomerization of proline imidic peptide bonds in oligopeptides and may therefore assist protein folding. Proposed to act as a co-chaperone in HSP90 complexes such as in unligated steroid receptors heterocomplexes. Different co-chaperones seem to compete for association with HSP90 thus establishing distinct HSP90-co-chaperone-receptor complexes with the potential to exert tissue-specific receptor activity control. May have a preference for estrogen receptor complexes and is not found in glucocorticoid receptor complexes. May be involved in cytoplasmic dynein-dependent movement of the receptor from the cytoplasm to the nucleus. May regulate MYB by inhibiting its DNA-binding activity. Involved in regulation of AHR signaling by promoting the formation of the AHR:ARNT dimer; the function is independent of HSP90 but requires the chaperone activity region. Involved in regulation of UV radiation-induced apoptosis.</text>
</comment>
<comment type="catalytic activity">
    <reaction evidence="2">
        <text>[protein]-peptidylproline (omega=180) = [protein]-peptidylproline (omega=0)</text>
        <dbReference type="Rhea" id="RHEA:16237"/>
        <dbReference type="Rhea" id="RHEA-COMP:10747"/>
        <dbReference type="Rhea" id="RHEA-COMP:10748"/>
        <dbReference type="ChEBI" id="CHEBI:83833"/>
        <dbReference type="ChEBI" id="CHEBI:83834"/>
        <dbReference type="EC" id="5.2.1.8"/>
    </reaction>
</comment>
<comment type="activity regulation">
    <text evidence="2">Less sensitive to inhibition by cyclosporin A than is CYP-18.</text>
</comment>
<comment type="subunit">
    <text evidence="1">Identified in ESR1 or NR3C1/GCR steroid receptor-chaperone complexes. Found in HSP90 chaperone complexes with kinase clients LCK or EIF2AK1. Two monomers associate with one HSP90 homodimer. Interacts with HSP90AA1. Interacts with HSP90AB1; PPID and FKBP4 compete for binding to HSP90AB1 and the interaction is mutually exclusive with the PPID:HSPA8 interaction. Interacts with HSPA8; PPID and STIP1 but not FKBP4 compete for binding to HSPA8 and the interaction is mutually exclusive with the PPID:HSP90AB1 interaction. Interacts with S100A1 and S100A2; the interactions dissociate the PPID:HSP90AA1 interaction. Interacts with S100A6. Interacts with MYB, ILF2, XRCC6, RACK1 and RPS3. Interacts with cytoplasmic dynein 1 intermediate chain (DYNC1I1 or DYNC1I2) (By similarity).</text>
</comment>
<comment type="subcellular location">
    <subcellularLocation>
        <location evidence="2">Cytoplasm</location>
    </subcellularLocation>
    <subcellularLocation>
        <location evidence="2">Nucleus</location>
        <location evidence="2">Nucleolus</location>
    </subcellularLocation>
    <subcellularLocation>
        <location evidence="2">Nucleus</location>
        <location evidence="2">Nucleoplasm</location>
    </subcellularLocation>
</comment>
<comment type="similarity">
    <text evidence="5">Belongs to the cyclophilin-type PPIase family. PPIase D subfamily.</text>
</comment>
<comment type="caution">
    <text evidence="5">This protein should not be confused with mitochondrial peptidyl-prolyl cis-trans isomerase F (PPIF) which is often referred to as cyclophilin D or CypD.</text>
</comment>
<dbReference type="EC" id="5.2.1.8" evidence="2"/>
<dbReference type="EMBL" id="BC076386">
    <property type="protein sequence ID" value="AAH76386.1"/>
    <property type="molecule type" value="mRNA"/>
</dbReference>
<dbReference type="RefSeq" id="NP_001004279.1">
    <property type="nucleotide sequence ID" value="NM_001004279.1"/>
</dbReference>
<dbReference type="SMR" id="Q6DGG0"/>
<dbReference type="FunCoup" id="Q6DGG0">
    <property type="interactions" value="3626"/>
</dbReference>
<dbReference type="STRING" id="10116.ENSRNOP00000035797"/>
<dbReference type="GlyGen" id="Q6DGG0">
    <property type="glycosylation" value="1 site"/>
</dbReference>
<dbReference type="iPTMnet" id="Q6DGG0"/>
<dbReference type="PhosphoSitePlus" id="Q6DGG0"/>
<dbReference type="SwissPalm" id="Q6DGG0"/>
<dbReference type="jPOST" id="Q6DGG0"/>
<dbReference type="PaxDb" id="10116-ENSRNOP00000035797"/>
<dbReference type="GeneID" id="361967"/>
<dbReference type="KEGG" id="rno:361967"/>
<dbReference type="UCSC" id="RGD:1303174">
    <property type="organism name" value="rat"/>
</dbReference>
<dbReference type="AGR" id="RGD:1303174"/>
<dbReference type="CTD" id="5481"/>
<dbReference type="RGD" id="1303174">
    <property type="gene designation" value="Ppid"/>
</dbReference>
<dbReference type="VEuPathDB" id="HostDB:ENSRNOG00000027408"/>
<dbReference type="eggNOG" id="KOG0546">
    <property type="taxonomic scope" value="Eukaryota"/>
</dbReference>
<dbReference type="HOGENOM" id="CLU_012062_37_1_1"/>
<dbReference type="InParanoid" id="Q6DGG0"/>
<dbReference type="OrthoDB" id="19211at9989"/>
<dbReference type="PhylomeDB" id="Q6DGG0"/>
<dbReference type="TreeFam" id="TF324493"/>
<dbReference type="PRO" id="PR:Q6DGG0"/>
<dbReference type="Proteomes" id="UP000002494">
    <property type="component" value="Chromosome 2"/>
</dbReference>
<dbReference type="Bgee" id="ENSRNOG00000027408">
    <property type="expression patterns" value="Expressed in cerebellum and 20 other cell types or tissues"/>
</dbReference>
<dbReference type="GO" id="GO:0005737">
    <property type="term" value="C:cytoplasm"/>
    <property type="evidence" value="ECO:0000250"/>
    <property type="project" value="UniProtKB"/>
</dbReference>
<dbReference type="GO" id="GO:0005829">
    <property type="term" value="C:cytosol"/>
    <property type="evidence" value="ECO:0000318"/>
    <property type="project" value="GO_Central"/>
</dbReference>
<dbReference type="GO" id="GO:0005730">
    <property type="term" value="C:nucleolus"/>
    <property type="evidence" value="ECO:0000250"/>
    <property type="project" value="UniProtKB"/>
</dbReference>
<dbReference type="GO" id="GO:0005654">
    <property type="term" value="C:nucleoplasm"/>
    <property type="evidence" value="ECO:0007669"/>
    <property type="project" value="UniProtKB-SubCell"/>
</dbReference>
<dbReference type="GO" id="GO:0005634">
    <property type="term" value="C:nucleus"/>
    <property type="evidence" value="ECO:0000250"/>
    <property type="project" value="UniProtKB"/>
</dbReference>
<dbReference type="GO" id="GO:0016018">
    <property type="term" value="F:cyclosporin A binding"/>
    <property type="evidence" value="ECO:0000314"/>
    <property type="project" value="RGD"/>
</dbReference>
<dbReference type="GO" id="GO:0019899">
    <property type="term" value="F:enzyme binding"/>
    <property type="evidence" value="ECO:0000353"/>
    <property type="project" value="RGD"/>
</dbReference>
<dbReference type="GO" id="GO:0031072">
    <property type="term" value="F:heat shock protein binding"/>
    <property type="evidence" value="ECO:0000266"/>
    <property type="project" value="RGD"/>
</dbReference>
<dbReference type="GO" id="GO:0030544">
    <property type="term" value="F:Hsp70 protein binding"/>
    <property type="evidence" value="ECO:0000250"/>
    <property type="project" value="UniProtKB"/>
</dbReference>
<dbReference type="GO" id="GO:0051879">
    <property type="term" value="F:Hsp90 protein binding"/>
    <property type="evidence" value="ECO:0000250"/>
    <property type="project" value="UniProtKB"/>
</dbReference>
<dbReference type="GO" id="GO:0030331">
    <property type="term" value="F:nuclear estrogen receptor binding"/>
    <property type="evidence" value="ECO:0000250"/>
    <property type="project" value="UniProtKB"/>
</dbReference>
<dbReference type="GO" id="GO:0003755">
    <property type="term" value="F:peptidyl-prolyl cis-trans isomerase activity"/>
    <property type="evidence" value="ECO:0000314"/>
    <property type="project" value="RGD"/>
</dbReference>
<dbReference type="GO" id="GO:0008134">
    <property type="term" value="F:transcription factor binding"/>
    <property type="evidence" value="ECO:0000250"/>
    <property type="project" value="UniProtKB"/>
</dbReference>
<dbReference type="GO" id="GO:0006915">
    <property type="term" value="P:apoptotic process"/>
    <property type="evidence" value="ECO:0007669"/>
    <property type="project" value="UniProtKB-KW"/>
</dbReference>
<dbReference type="GO" id="GO:0071492">
    <property type="term" value="P:cellular response to UV-A"/>
    <property type="evidence" value="ECO:0000250"/>
    <property type="project" value="UniProtKB"/>
</dbReference>
<dbReference type="GO" id="GO:0061077">
    <property type="term" value="P:chaperone-mediated protein folding"/>
    <property type="evidence" value="ECO:0000250"/>
    <property type="project" value="UniProtKB"/>
</dbReference>
<dbReference type="GO" id="GO:0034389">
    <property type="term" value="P:lipid droplet organization"/>
    <property type="evidence" value="ECO:0000250"/>
    <property type="project" value="UniProtKB"/>
</dbReference>
<dbReference type="GO" id="GO:0043066">
    <property type="term" value="P:negative regulation of apoptotic process"/>
    <property type="evidence" value="ECO:0000315"/>
    <property type="project" value="RGD"/>
</dbReference>
<dbReference type="GO" id="GO:0000122">
    <property type="term" value="P:negative regulation of transcription by RNA polymerase II"/>
    <property type="evidence" value="ECO:0000250"/>
    <property type="project" value="UniProtKB"/>
</dbReference>
<dbReference type="GO" id="GO:0043065">
    <property type="term" value="P:positive regulation of apoptotic process"/>
    <property type="evidence" value="ECO:0000250"/>
    <property type="project" value="UniProtKB"/>
</dbReference>
<dbReference type="GO" id="GO:0050714">
    <property type="term" value="P:positive regulation of protein secretion"/>
    <property type="evidence" value="ECO:0000266"/>
    <property type="project" value="RGD"/>
</dbReference>
<dbReference type="GO" id="GO:0045070">
    <property type="term" value="P:positive regulation of viral genome replication"/>
    <property type="evidence" value="ECO:0000266"/>
    <property type="project" value="RGD"/>
</dbReference>
<dbReference type="GO" id="GO:0006457">
    <property type="term" value="P:protein folding"/>
    <property type="evidence" value="ECO:0000250"/>
    <property type="project" value="UniProtKB"/>
</dbReference>
<dbReference type="GO" id="GO:0015031">
    <property type="term" value="P:protein transport"/>
    <property type="evidence" value="ECO:0007669"/>
    <property type="project" value="UniProtKB-KW"/>
</dbReference>
<dbReference type="GO" id="GO:0065003">
    <property type="term" value="P:protein-containing complex assembly"/>
    <property type="evidence" value="ECO:0000250"/>
    <property type="project" value="UniProtKB"/>
</dbReference>
<dbReference type="GO" id="GO:0051881">
    <property type="term" value="P:regulation of mitochondrial membrane potential"/>
    <property type="evidence" value="ECO:0000315"/>
    <property type="project" value="RGD"/>
</dbReference>
<dbReference type="GO" id="GO:0006979">
    <property type="term" value="P:response to oxidative stress"/>
    <property type="evidence" value="ECO:0000315"/>
    <property type="project" value="RGD"/>
</dbReference>
<dbReference type="CDD" id="cd01926">
    <property type="entry name" value="cyclophilin_ABH_like"/>
    <property type="match status" value="1"/>
</dbReference>
<dbReference type="FunFam" id="2.40.100.10:FF:000009">
    <property type="entry name" value="Peptidyl-prolyl cis-trans isomerase D"/>
    <property type="match status" value="1"/>
</dbReference>
<dbReference type="FunFam" id="1.25.40.10:FF:000029">
    <property type="entry name" value="peptidyl-prolyl cis-trans isomerase D"/>
    <property type="match status" value="1"/>
</dbReference>
<dbReference type="Gene3D" id="2.40.100.10">
    <property type="entry name" value="Cyclophilin-like"/>
    <property type="match status" value="1"/>
</dbReference>
<dbReference type="Gene3D" id="1.25.40.10">
    <property type="entry name" value="Tetratricopeptide repeat domain"/>
    <property type="match status" value="1"/>
</dbReference>
<dbReference type="InterPro" id="IPR029000">
    <property type="entry name" value="Cyclophilin-like_dom_sf"/>
</dbReference>
<dbReference type="InterPro" id="IPR020892">
    <property type="entry name" value="Cyclophilin-type_PPIase_CS"/>
</dbReference>
<dbReference type="InterPro" id="IPR002130">
    <property type="entry name" value="Cyclophilin-type_PPIase_dom"/>
</dbReference>
<dbReference type="InterPro" id="IPR011990">
    <property type="entry name" value="TPR-like_helical_dom_sf"/>
</dbReference>
<dbReference type="InterPro" id="IPR019734">
    <property type="entry name" value="TPR_rpt"/>
</dbReference>
<dbReference type="PANTHER" id="PTHR11071">
    <property type="entry name" value="PEPTIDYL-PROLYL CIS-TRANS ISOMERASE"/>
    <property type="match status" value="1"/>
</dbReference>
<dbReference type="PANTHER" id="PTHR11071:SF561">
    <property type="entry name" value="PEPTIDYL-PROLYL CIS-TRANS ISOMERASE D-RELATED"/>
    <property type="match status" value="1"/>
</dbReference>
<dbReference type="Pfam" id="PF00160">
    <property type="entry name" value="Pro_isomerase"/>
    <property type="match status" value="1"/>
</dbReference>
<dbReference type="PRINTS" id="PR00153">
    <property type="entry name" value="CSAPPISMRASE"/>
</dbReference>
<dbReference type="SMART" id="SM00028">
    <property type="entry name" value="TPR"/>
    <property type="match status" value="3"/>
</dbReference>
<dbReference type="SUPFAM" id="SSF50891">
    <property type="entry name" value="Cyclophilin-like"/>
    <property type="match status" value="1"/>
</dbReference>
<dbReference type="SUPFAM" id="SSF48452">
    <property type="entry name" value="TPR-like"/>
    <property type="match status" value="1"/>
</dbReference>
<dbReference type="PROSITE" id="PS00170">
    <property type="entry name" value="CSA_PPIASE_1"/>
    <property type="match status" value="1"/>
</dbReference>
<dbReference type="PROSITE" id="PS50072">
    <property type="entry name" value="CSA_PPIASE_2"/>
    <property type="match status" value="1"/>
</dbReference>
<dbReference type="PROSITE" id="PS50005">
    <property type="entry name" value="TPR"/>
    <property type="match status" value="3"/>
</dbReference>
<dbReference type="PROSITE" id="PS50293">
    <property type="entry name" value="TPR_REGION"/>
    <property type="match status" value="2"/>
</dbReference>
<feature type="chain" id="PRO_0000064155" description="Peptidyl-prolyl cis-trans isomerase D">
    <location>
        <begin position="1"/>
        <end position="370"/>
    </location>
</feature>
<feature type="domain" description="PPIase cyclophilin-type" evidence="4">
    <location>
        <begin position="19"/>
        <end position="183"/>
    </location>
</feature>
<feature type="repeat" description="TPR 1">
    <location>
        <begin position="223"/>
        <end position="256"/>
    </location>
</feature>
<feature type="repeat" description="TPR 2">
    <location>
        <begin position="273"/>
        <end position="306"/>
    </location>
</feature>
<feature type="repeat" description="TPR 3">
    <location>
        <begin position="308"/>
        <end position="340"/>
    </location>
</feature>
<feature type="region of interest" description="Chaperone activity" evidence="1">
    <location>
        <begin position="185"/>
        <end position="215"/>
    </location>
</feature>
<feature type="region of interest" description="Interaction with HSP90AB1" evidence="1">
    <location>
        <begin position="214"/>
        <end position="370"/>
    </location>
</feature>
<feature type="modified residue" description="Phosphoserine" evidence="2">
    <location>
        <position position="5"/>
    </location>
</feature>
<feature type="modified residue" description="N6-acetyllysine" evidence="3">
    <location>
        <position position="171"/>
    </location>
</feature>
<feature type="modified residue" description="Phosphoserine" evidence="2">
    <location>
        <position position="198"/>
    </location>
</feature>
<sequence length="370" mass="40766">MSHPSPAGKPSNSKNPRVFFDVDIGGERVGRIVLELFADIVPKTAENFRALCTGEKGTGPTTGKPLHFKGCPFHRIIKKFMIQGGDFSNQNGTGGESIYGEKFEDENFHYKHDREGLLSMANAGPNTNGSQFFITTVPTPHLDGKHVVFGQVIKGLGVARMLENVEVNGEKPAKLCVIAECGELKEGDEWGIFPKDGSGDSHPDFPEDADIDLKDVDKILLISEDLKNIGNTFFKSQNWEMAIKKYAKVLRYLDSSKAVIEKADVSRLQPIALSCVLNIGACKLKMSNWQGAIDSCLEALEMDPSNTKALYRKAQGWQGLKEYDQALADLKKAQEIAPGDKAIQAELLKVKQMIKAQKDKEKAVYAKMFA</sequence>
<name>PPID_RAT</name>
<reference key="1">
    <citation type="journal article" date="2004" name="Genome Res.">
        <title>The status, quality, and expansion of the NIH full-length cDNA project: the Mammalian Gene Collection (MGC).</title>
        <authorList>
            <consortium name="The MGC Project Team"/>
        </authorList>
    </citation>
    <scope>NUCLEOTIDE SEQUENCE [LARGE SCALE MRNA]</scope>
    <source>
        <tissue>Kidney</tissue>
    </source>
</reference>
<reference key="2">
    <citation type="submission" date="2007-04" db="UniProtKB">
        <authorList>
            <person name="Lubec G."/>
            <person name="Diao W."/>
        </authorList>
    </citation>
    <scope>PROTEIN SEQUENCE OF 18-28 AND 32-43</scope>
    <scope>IDENTIFICATION BY MASS SPECTROMETRY</scope>
    <source>
        <strain>Sprague-Dawley</strain>
        <tissue>Hippocampus</tissue>
    </source>
</reference>
<gene>
    <name evidence="6" type="primary">Ppid</name>
</gene>
<accession>Q6DGG0</accession>